<proteinExistence type="inferred from homology"/>
<feature type="chain" id="PRO_0000179407" description="Trigger factor">
    <location>
        <begin position="1"/>
        <end position="436"/>
    </location>
</feature>
<feature type="domain" description="PPIase FKBP-type" evidence="1">
    <location>
        <begin position="161"/>
        <end position="246"/>
    </location>
</feature>
<name>TIG_PSEAE</name>
<reference key="1">
    <citation type="journal article" date="2000" name="Nature">
        <title>Complete genome sequence of Pseudomonas aeruginosa PAO1, an opportunistic pathogen.</title>
        <authorList>
            <person name="Stover C.K."/>
            <person name="Pham X.-Q.T."/>
            <person name="Erwin A.L."/>
            <person name="Mizoguchi S.D."/>
            <person name="Warrener P."/>
            <person name="Hickey M.J."/>
            <person name="Brinkman F.S.L."/>
            <person name="Hufnagle W.O."/>
            <person name="Kowalik D.J."/>
            <person name="Lagrou M."/>
            <person name="Garber R.L."/>
            <person name="Goltry L."/>
            <person name="Tolentino E."/>
            <person name="Westbrock-Wadman S."/>
            <person name="Yuan Y."/>
            <person name="Brody L.L."/>
            <person name="Coulter S.N."/>
            <person name="Folger K.R."/>
            <person name="Kas A."/>
            <person name="Larbig K."/>
            <person name="Lim R.M."/>
            <person name="Smith K.A."/>
            <person name="Spencer D.H."/>
            <person name="Wong G.K.-S."/>
            <person name="Wu Z."/>
            <person name="Paulsen I.T."/>
            <person name="Reizer J."/>
            <person name="Saier M.H. Jr."/>
            <person name="Hancock R.E.W."/>
            <person name="Lory S."/>
            <person name="Olson M.V."/>
        </authorList>
    </citation>
    <scope>NUCLEOTIDE SEQUENCE [LARGE SCALE GENOMIC DNA]</scope>
    <source>
        <strain>ATCC 15692 / DSM 22644 / CIP 104116 / JCM 14847 / LMG 12228 / 1C / PRS 101 / PAO1</strain>
    </source>
</reference>
<accession>Q9I2U2</accession>
<keyword id="KW-0131">Cell cycle</keyword>
<keyword id="KW-0132">Cell division</keyword>
<keyword id="KW-0143">Chaperone</keyword>
<keyword id="KW-0963">Cytoplasm</keyword>
<keyword id="KW-0413">Isomerase</keyword>
<keyword id="KW-1185">Reference proteome</keyword>
<keyword id="KW-0697">Rotamase</keyword>
<organism>
    <name type="scientific">Pseudomonas aeruginosa (strain ATCC 15692 / DSM 22644 / CIP 104116 / JCM 14847 / LMG 12228 / 1C / PRS 101 / PAO1)</name>
    <dbReference type="NCBI Taxonomy" id="208964"/>
    <lineage>
        <taxon>Bacteria</taxon>
        <taxon>Pseudomonadati</taxon>
        <taxon>Pseudomonadota</taxon>
        <taxon>Gammaproteobacteria</taxon>
        <taxon>Pseudomonadales</taxon>
        <taxon>Pseudomonadaceae</taxon>
        <taxon>Pseudomonas</taxon>
    </lineage>
</organism>
<dbReference type="EC" id="5.2.1.8" evidence="1"/>
<dbReference type="EMBL" id="AE004091">
    <property type="protein sequence ID" value="AAG05189.1"/>
    <property type="molecule type" value="Genomic_DNA"/>
</dbReference>
<dbReference type="PIR" id="D83420">
    <property type="entry name" value="D83420"/>
</dbReference>
<dbReference type="RefSeq" id="NP_250491.1">
    <property type="nucleotide sequence ID" value="NC_002516.2"/>
</dbReference>
<dbReference type="RefSeq" id="WP_003087920.1">
    <property type="nucleotide sequence ID" value="NZ_QZGE01000003.1"/>
</dbReference>
<dbReference type="SMR" id="Q9I2U2"/>
<dbReference type="FunCoup" id="Q9I2U2">
    <property type="interactions" value="802"/>
</dbReference>
<dbReference type="STRING" id="208964.PA1800"/>
<dbReference type="PaxDb" id="208964-PA1800"/>
<dbReference type="GeneID" id="877637"/>
<dbReference type="KEGG" id="pae:PA1800"/>
<dbReference type="PATRIC" id="fig|208964.12.peg.1870"/>
<dbReference type="PseudoCAP" id="PA1800"/>
<dbReference type="HOGENOM" id="CLU_033058_2_0_6"/>
<dbReference type="InParanoid" id="Q9I2U2"/>
<dbReference type="OrthoDB" id="9767721at2"/>
<dbReference type="PhylomeDB" id="Q9I2U2"/>
<dbReference type="BioCyc" id="PAER208964:G1FZ6-1837-MONOMER"/>
<dbReference type="Proteomes" id="UP000002438">
    <property type="component" value="Chromosome"/>
</dbReference>
<dbReference type="GO" id="GO:0005737">
    <property type="term" value="C:cytoplasm"/>
    <property type="evidence" value="ECO:0007669"/>
    <property type="project" value="UniProtKB-SubCell"/>
</dbReference>
<dbReference type="GO" id="GO:0003755">
    <property type="term" value="F:peptidyl-prolyl cis-trans isomerase activity"/>
    <property type="evidence" value="ECO:0000318"/>
    <property type="project" value="GO_Central"/>
</dbReference>
<dbReference type="GO" id="GO:0044183">
    <property type="term" value="F:protein folding chaperone"/>
    <property type="evidence" value="ECO:0000318"/>
    <property type="project" value="GO_Central"/>
</dbReference>
<dbReference type="GO" id="GO:0043022">
    <property type="term" value="F:ribosome binding"/>
    <property type="evidence" value="ECO:0000318"/>
    <property type="project" value="GO_Central"/>
</dbReference>
<dbReference type="GO" id="GO:0051083">
    <property type="term" value="P:'de novo' cotranslational protein folding"/>
    <property type="evidence" value="ECO:0000318"/>
    <property type="project" value="GO_Central"/>
</dbReference>
<dbReference type="GO" id="GO:0051301">
    <property type="term" value="P:cell division"/>
    <property type="evidence" value="ECO:0007669"/>
    <property type="project" value="UniProtKB-KW"/>
</dbReference>
<dbReference type="GO" id="GO:0061077">
    <property type="term" value="P:chaperone-mediated protein folding"/>
    <property type="evidence" value="ECO:0000318"/>
    <property type="project" value="GO_Central"/>
</dbReference>
<dbReference type="GO" id="GO:0015031">
    <property type="term" value="P:protein transport"/>
    <property type="evidence" value="ECO:0007669"/>
    <property type="project" value="UniProtKB-UniRule"/>
</dbReference>
<dbReference type="GO" id="GO:0043335">
    <property type="term" value="P:protein unfolding"/>
    <property type="evidence" value="ECO:0000318"/>
    <property type="project" value="GO_Central"/>
</dbReference>
<dbReference type="FunFam" id="3.10.50.40:FF:000001">
    <property type="entry name" value="Trigger factor"/>
    <property type="match status" value="1"/>
</dbReference>
<dbReference type="FunFam" id="3.30.70.1050:FF:000001">
    <property type="entry name" value="Trigger factor"/>
    <property type="match status" value="1"/>
</dbReference>
<dbReference type="Gene3D" id="3.10.50.40">
    <property type="match status" value="1"/>
</dbReference>
<dbReference type="Gene3D" id="3.30.70.1050">
    <property type="entry name" value="Trigger factor ribosome-binding domain"/>
    <property type="match status" value="1"/>
</dbReference>
<dbReference type="Gene3D" id="1.10.3120.10">
    <property type="entry name" value="Trigger factor, C-terminal domain"/>
    <property type="match status" value="1"/>
</dbReference>
<dbReference type="HAMAP" id="MF_00303">
    <property type="entry name" value="Trigger_factor_Tig"/>
    <property type="match status" value="1"/>
</dbReference>
<dbReference type="InterPro" id="IPR046357">
    <property type="entry name" value="PPIase_dom_sf"/>
</dbReference>
<dbReference type="InterPro" id="IPR001179">
    <property type="entry name" value="PPIase_FKBP_dom"/>
</dbReference>
<dbReference type="InterPro" id="IPR005215">
    <property type="entry name" value="Trig_fac"/>
</dbReference>
<dbReference type="InterPro" id="IPR008880">
    <property type="entry name" value="Trigger_fac_C"/>
</dbReference>
<dbReference type="InterPro" id="IPR037041">
    <property type="entry name" value="Trigger_fac_C_sf"/>
</dbReference>
<dbReference type="InterPro" id="IPR008881">
    <property type="entry name" value="Trigger_fac_ribosome-bd_bac"/>
</dbReference>
<dbReference type="InterPro" id="IPR036611">
    <property type="entry name" value="Trigger_fac_ribosome-bd_sf"/>
</dbReference>
<dbReference type="InterPro" id="IPR027304">
    <property type="entry name" value="Trigger_fact/SurA_dom_sf"/>
</dbReference>
<dbReference type="NCBIfam" id="TIGR00115">
    <property type="entry name" value="tig"/>
    <property type="match status" value="1"/>
</dbReference>
<dbReference type="PANTHER" id="PTHR30560">
    <property type="entry name" value="TRIGGER FACTOR CHAPERONE AND PEPTIDYL-PROLYL CIS/TRANS ISOMERASE"/>
    <property type="match status" value="1"/>
</dbReference>
<dbReference type="PANTHER" id="PTHR30560:SF3">
    <property type="entry name" value="TRIGGER FACTOR-LIKE PROTEIN TIG, CHLOROPLASTIC"/>
    <property type="match status" value="1"/>
</dbReference>
<dbReference type="Pfam" id="PF00254">
    <property type="entry name" value="FKBP_C"/>
    <property type="match status" value="1"/>
</dbReference>
<dbReference type="Pfam" id="PF05698">
    <property type="entry name" value="Trigger_C"/>
    <property type="match status" value="1"/>
</dbReference>
<dbReference type="Pfam" id="PF05697">
    <property type="entry name" value="Trigger_N"/>
    <property type="match status" value="1"/>
</dbReference>
<dbReference type="PIRSF" id="PIRSF003095">
    <property type="entry name" value="Trigger_factor"/>
    <property type="match status" value="1"/>
</dbReference>
<dbReference type="SUPFAM" id="SSF54534">
    <property type="entry name" value="FKBP-like"/>
    <property type="match status" value="1"/>
</dbReference>
<dbReference type="SUPFAM" id="SSF109998">
    <property type="entry name" value="Triger factor/SurA peptide-binding domain-like"/>
    <property type="match status" value="1"/>
</dbReference>
<dbReference type="SUPFAM" id="SSF102735">
    <property type="entry name" value="Trigger factor ribosome-binding domain"/>
    <property type="match status" value="1"/>
</dbReference>
<dbReference type="PROSITE" id="PS50059">
    <property type="entry name" value="FKBP_PPIASE"/>
    <property type="match status" value="1"/>
</dbReference>
<gene>
    <name evidence="1" type="primary">tig</name>
    <name type="ordered locus">PA1800</name>
</gene>
<sequence>MQVSVESTSALERRMTVGVPAERIETEVNKRLQQTARRAKIPGFRPGKVPMSVIRQRYEASARQEAMGDLIQETFYEAVVEQKLNPAGSPSVEPKSFEKGKDLEYIATFEVFPEFTVSGLEDIKVERLQAEVSDADVDNMLDVLRKQNTRFEVVERAAQNDDQLNIDFVGKIDGEAFAGGSAKGTLLVLGSGRMIAGFEEGLVGAKAGEERVLNLTFPEDYQNLDLANKAAEFTVTVNSVAEPKLPELNEEFFALFGVKETGLDGFRAEVQKNMERELRQAIKSKVKNQVMEGLLQANPIEVPKALIGNEVNRLRVQAVQQFGGNIKPDQLPAELFEEQAKRRVVLGLIVAEVVKQHELKADEGRVREMIEEMASAYQEPEQVVAWYFKNEPQLNEVRSVVLEEQVVDTVLQKATVTDKQVSYEEAVKPAEAPQAA</sequence>
<protein>
    <recommendedName>
        <fullName evidence="1">Trigger factor</fullName>
        <shortName evidence="1">TF</shortName>
        <ecNumber evidence="1">5.2.1.8</ecNumber>
    </recommendedName>
    <alternativeName>
        <fullName evidence="1">PPIase</fullName>
    </alternativeName>
</protein>
<evidence type="ECO:0000255" key="1">
    <source>
        <dbReference type="HAMAP-Rule" id="MF_00303"/>
    </source>
</evidence>
<comment type="function">
    <text evidence="1">Involved in protein export. Acts as a chaperone by maintaining the newly synthesized protein in an open conformation. Functions as a peptidyl-prolyl cis-trans isomerase.</text>
</comment>
<comment type="catalytic activity">
    <reaction evidence="1">
        <text>[protein]-peptidylproline (omega=180) = [protein]-peptidylproline (omega=0)</text>
        <dbReference type="Rhea" id="RHEA:16237"/>
        <dbReference type="Rhea" id="RHEA-COMP:10747"/>
        <dbReference type="Rhea" id="RHEA-COMP:10748"/>
        <dbReference type="ChEBI" id="CHEBI:83833"/>
        <dbReference type="ChEBI" id="CHEBI:83834"/>
        <dbReference type="EC" id="5.2.1.8"/>
    </reaction>
</comment>
<comment type="subcellular location">
    <subcellularLocation>
        <location>Cytoplasm</location>
    </subcellularLocation>
    <text evidence="1">About half TF is bound to the ribosome near the polypeptide exit tunnel while the other half is free in the cytoplasm.</text>
</comment>
<comment type="domain">
    <text evidence="1">Consists of 3 domains; the N-terminus binds the ribosome, the middle domain has PPIase activity, while the C-terminus has intrinsic chaperone activity on its own.</text>
</comment>
<comment type="similarity">
    <text evidence="1">Belongs to the FKBP-type PPIase family. Tig subfamily.</text>
</comment>